<accession>Q1IB54</accession>
<proteinExistence type="inferred from homology"/>
<organism>
    <name type="scientific">Pseudomonas entomophila (strain L48)</name>
    <dbReference type="NCBI Taxonomy" id="384676"/>
    <lineage>
        <taxon>Bacteria</taxon>
        <taxon>Pseudomonadati</taxon>
        <taxon>Pseudomonadota</taxon>
        <taxon>Gammaproteobacteria</taxon>
        <taxon>Pseudomonadales</taxon>
        <taxon>Pseudomonadaceae</taxon>
        <taxon>Pseudomonas</taxon>
    </lineage>
</organism>
<reference key="1">
    <citation type="journal article" date="2006" name="Nat. Biotechnol.">
        <title>Complete genome sequence of the entomopathogenic and metabolically versatile soil bacterium Pseudomonas entomophila.</title>
        <authorList>
            <person name="Vodovar N."/>
            <person name="Vallenet D."/>
            <person name="Cruveiller S."/>
            <person name="Rouy Z."/>
            <person name="Barbe V."/>
            <person name="Acosta C."/>
            <person name="Cattolico L."/>
            <person name="Jubin C."/>
            <person name="Lajus A."/>
            <person name="Segurens B."/>
            <person name="Vacherie B."/>
            <person name="Wincker P."/>
            <person name="Weissenbach J."/>
            <person name="Lemaitre B."/>
            <person name="Medigue C."/>
            <person name="Boccard F."/>
        </authorList>
    </citation>
    <scope>NUCLEOTIDE SEQUENCE [LARGE SCALE GENOMIC DNA]</scope>
    <source>
        <strain>L48</strain>
    </source>
</reference>
<sequence length="215" mass="23808">MSEHETTGEGRFSSIEIRVLGSLIEKQATSPETYPLTLNALVLACNQKTSREPVMNLSPGQVGQALRALEGQEMARLQMGSRADRWEQRVDKALELVPAQLVLMGLMFLRGPQTLNELLTRSNRLHDFEDVDQVQHQLERLISRGLALHLPRQAGQREDRYTHALGDPAQIEEILAARQQEGGGRSAGGSVSEERIEALEARIAALEARLAQLEG</sequence>
<gene>
    <name type="ordered locus">PSEEN2299</name>
</gene>
<name>Y2299_PSEE4</name>
<feature type="chain" id="PRO_0000309404" description="UPF0502 protein PSEEN2299">
    <location>
        <begin position="1"/>
        <end position="215"/>
    </location>
</feature>
<evidence type="ECO:0000255" key="1">
    <source>
        <dbReference type="HAMAP-Rule" id="MF_01584"/>
    </source>
</evidence>
<dbReference type="EMBL" id="CT573326">
    <property type="protein sequence ID" value="CAK15112.1"/>
    <property type="molecule type" value="Genomic_DNA"/>
</dbReference>
<dbReference type="RefSeq" id="WP_011533512.1">
    <property type="nucleotide sequence ID" value="NC_008027.1"/>
</dbReference>
<dbReference type="SMR" id="Q1IB54"/>
<dbReference type="GeneID" id="32805487"/>
<dbReference type="KEGG" id="pen:PSEEN2299"/>
<dbReference type="eggNOG" id="COG3132">
    <property type="taxonomic scope" value="Bacteria"/>
</dbReference>
<dbReference type="HOGENOM" id="CLU_057831_2_0_6"/>
<dbReference type="OrthoDB" id="9784785at2"/>
<dbReference type="Proteomes" id="UP000000658">
    <property type="component" value="Chromosome"/>
</dbReference>
<dbReference type="Gene3D" id="1.10.10.10">
    <property type="entry name" value="Winged helix-like DNA-binding domain superfamily/Winged helix DNA-binding domain"/>
    <property type="match status" value="2"/>
</dbReference>
<dbReference type="HAMAP" id="MF_01584">
    <property type="entry name" value="UPF0502"/>
    <property type="match status" value="1"/>
</dbReference>
<dbReference type="InterPro" id="IPR007432">
    <property type="entry name" value="DUF480"/>
</dbReference>
<dbReference type="InterPro" id="IPR036388">
    <property type="entry name" value="WH-like_DNA-bd_sf"/>
</dbReference>
<dbReference type="InterPro" id="IPR036390">
    <property type="entry name" value="WH_DNA-bd_sf"/>
</dbReference>
<dbReference type="PANTHER" id="PTHR38768">
    <property type="entry name" value="UPF0502 PROTEIN YCEH"/>
    <property type="match status" value="1"/>
</dbReference>
<dbReference type="PANTHER" id="PTHR38768:SF1">
    <property type="entry name" value="UPF0502 PROTEIN YCEH"/>
    <property type="match status" value="1"/>
</dbReference>
<dbReference type="Pfam" id="PF04337">
    <property type="entry name" value="DUF480"/>
    <property type="match status" value="1"/>
</dbReference>
<dbReference type="SUPFAM" id="SSF46785">
    <property type="entry name" value="Winged helix' DNA-binding domain"/>
    <property type="match status" value="2"/>
</dbReference>
<comment type="similarity">
    <text evidence="1">Belongs to the UPF0502 family.</text>
</comment>
<protein>
    <recommendedName>
        <fullName evidence="1">UPF0502 protein PSEEN2299</fullName>
    </recommendedName>
</protein>